<feature type="chain" id="PRO_0000067133" description="Putative ankyrin repeat protein L14">
    <location>
        <begin position="1" status="less than"/>
        <end position="107"/>
    </location>
</feature>
<feature type="repeat" description="ANK 1">
    <location>
        <begin position="19"/>
        <end position="48"/>
    </location>
</feature>
<feature type="repeat" description="ANK 2">
    <location>
        <begin position="49"/>
        <end position="78"/>
    </location>
</feature>
<feature type="repeat" description="ANK 3">
    <location>
        <begin position="80"/>
        <end position="107"/>
    </location>
</feature>
<feature type="non-terminal residue">
    <location>
        <position position="1"/>
    </location>
</feature>
<accession>Q5UP96</accession>
<reference key="1">
    <citation type="journal article" date="2004" name="Science">
        <title>The 1.2-megabase genome sequence of Mimivirus.</title>
        <authorList>
            <person name="Raoult D."/>
            <person name="Audic S."/>
            <person name="Robert C."/>
            <person name="Abergel C."/>
            <person name="Renesto P."/>
            <person name="Ogata H."/>
            <person name="La Scola B."/>
            <person name="Susan M."/>
            <person name="Claverie J.-M."/>
        </authorList>
    </citation>
    <scope>NUCLEOTIDE SEQUENCE [LARGE SCALE GENOMIC DNA]</scope>
    <source>
        <strain>Rowbotham-Bradford</strain>
    </source>
</reference>
<sequence length="107" mass="11774">QSIIRKLILVSKGTNISVDNNYVVRPTSIKVYIEVVKYLVSQGANIRADNDCAVRFASRNGHLEVVKYLVSLGANIRADNDCAVRWASRNGHLDVVEYLVSLGAVLS</sequence>
<gene>
    <name type="ordered locus">MIMI_L14</name>
</gene>
<dbReference type="EMBL" id="AY653733">
    <property type="protein sequence ID" value="AAV50289.1"/>
    <property type="molecule type" value="Genomic_DNA"/>
</dbReference>
<dbReference type="SMR" id="Q5UP96"/>
<dbReference type="Proteomes" id="UP000001134">
    <property type="component" value="Genome"/>
</dbReference>
<dbReference type="Gene3D" id="1.25.40.20">
    <property type="entry name" value="Ankyrin repeat-containing domain"/>
    <property type="match status" value="1"/>
</dbReference>
<dbReference type="InterPro" id="IPR002110">
    <property type="entry name" value="Ankyrin_rpt"/>
</dbReference>
<dbReference type="InterPro" id="IPR036770">
    <property type="entry name" value="Ankyrin_rpt-contain_sf"/>
</dbReference>
<dbReference type="PANTHER" id="PTHR24188">
    <property type="entry name" value="ANKYRIN REPEAT PROTEIN"/>
    <property type="match status" value="1"/>
</dbReference>
<dbReference type="PANTHER" id="PTHR24188:SF29">
    <property type="entry name" value="GH09064P"/>
    <property type="match status" value="1"/>
</dbReference>
<dbReference type="Pfam" id="PF12796">
    <property type="entry name" value="Ank_2"/>
    <property type="match status" value="1"/>
</dbReference>
<dbReference type="SMART" id="SM00248">
    <property type="entry name" value="ANK"/>
    <property type="match status" value="3"/>
</dbReference>
<dbReference type="SUPFAM" id="SSF48403">
    <property type="entry name" value="Ankyrin repeat"/>
    <property type="match status" value="1"/>
</dbReference>
<dbReference type="PROSITE" id="PS50297">
    <property type="entry name" value="ANK_REP_REGION"/>
    <property type="match status" value="2"/>
</dbReference>
<dbReference type="PROSITE" id="PS50088">
    <property type="entry name" value="ANK_REPEAT"/>
    <property type="match status" value="2"/>
</dbReference>
<protein>
    <recommendedName>
        <fullName>Putative ankyrin repeat protein L14</fullName>
    </recommendedName>
</protein>
<organismHost>
    <name type="scientific">Acanthamoeba polyphaga</name>
    <name type="common">Amoeba</name>
    <dbReference type="NCBI Taxonomy" id="5757"/>
</organismHost>
<keyword id="KW-0040">ANK repeat</keyword>
<keyword id="KW-1185">Reference proteome</keyword>
<keyword id="KW-0677">Repeat</keyword>
<name>YL014_MIMIV</name>
<proteinExistence type="predicted"/>
<organism>
    <name type="scientific">Acanthamoeba polyphaga mimivirus</name>
    <name type="common">APMV</name>
    <dbReference type="NCBI Taxonomy" id="212035"/>
    <lineage>
        <taxon>Viruses</taxon>
        <taxon>Varidnaviria</taxon>
        <taxon>Bamfordvirae</taxon>
        <taxon>Nucleocytoviricota</taxon>
        <taxon>Megaviricetes</taxon>
        <taxon>Imitervirales</taxon>
        <taxon>Mimiviridae</taxon>
        <taxon>Megamimivirinae</taxon>
        <taxon>Mimivirus</taxon>
        <taxon>Mimivirus bradfordmassiliense</taxon>
    </lineage>
</organism>